<comment type="function">
    <text evidence="1">Catalyzes the reversible adenylation of nicotinate mononucleotide (NaMN) to nicotinic acid adenine dinucleotide (NaAD).</text>
</comment>
<comment type="catalytic activity">
    <reaction evidence="1">
        <text>nicotinate beta-D-ribonucleotide + ATP + H(+) = deamido-NAD(+) + diphosphate</text>
        <dbReference type="Rhea" id="RHEA:22860"/>
        <dbReference type="ChEBI" id="CHEBI:15378"/>
        <dbReference type="ChEBI" id="CHEBI:30616"/>
        <dbReference type="ChEBI" id="CHEBI:33019"/>
        <dbReference type="ChEBI" id="CHEBI:57502"/>
        <dbReference type="ChEBI" id="CHEBI:58437"/>
        <dbReference type="EC" id="2.7.7.18"/>
    </reaction>
</comment>
<comment type="pathway">
    <text evidence="1">Cofactor biosynthesis; NAD(+) biosynthesis; deamido-NAD(+) from nicotinate D-ribonucleotide: step 1/1.</text>
</comment>
<comment type="similarity">
    <text evidence="1">Belongs to the NadD family.</text>
</comment>
<proteinExistence type="inferred from homology"/>
<dbReference type="EC" id="2.7.7.18" evidence="1"/>
<dbReference type="EMBL" id="CP000446">
    <property type="protein sequence ID" value="ABI38074.1"/>
    <property type="molecule type" value="Genomic_DNA"/>
</dbReference>
<dbReference type="RefSeq" id="WP_011621786.1">
    <property type="nucleotide sequence ID" value="NC_008321.1"/>
</dbReference>
<dbReference type="SMR" id="Q0HLJ3"/>
<dbReference type="KEGG" id="she:Shewmr4_0994"/>
<dbReference type="HOGENOM" id="CLU_069765_0_0_6"/>
<dbReference type="UniPathway" id="UPA00253">
    <property type="reaction ID" value="UER00332"/>
</dbReference>
<dbReference type="GO" id="GO:0005524">
    <property type="term" value="F:ATP binding"/>
    <property type="evidence" value="ECO:0007669"/>
    <property type="project" value="UniProtKB-KW"/>
</dbReference>
<dbReference type="GO" id="GO:0004515">
    <property type="term" value="F:nicotinate-nucleotide adenylyltransferase activity"/>
    <property type="evidence" value="ECO:0007669"/>
    <property type="project" value="UniProtKB-UniRule"/>
</dbReference>
<dbReference type="GO" id="GO:0009435">
    <property type="term" value="P:NAD biosynthetic process"/>
    <property type="evidence" value="ECO:0007669"/>
    <property type="project" value="UniProtKB-UniRule"/>
</dbReference>
<dbReference type="CDD" id="cd02165">
    <property type="entry name" value="NMNAT"/>
    <property type="match status" value="1"/>
</dbReference>
<dbReference type="FunFam" id="3.40.50.620:FF:000039">
    <property type="entry name" value="Probable nicotinate-nucleotide adenylyltransferase"/>
    <property type="match status" value="1"/>
</dbReference>
<dbReference type="Gene3D" id="3.40.50.620">
    <property type="entry name" value="HUPs"/>
    <property type="match status" value="1"/>
</dbReference>
<dbReference type="HAMAP" id="MF_00244">
    <property type="entry name" value="NaMN_adenylyltr"/>
    <property type="match status" value="1"/>
</dbReference>
<dbReference type="InterPro" id="IPR004821">
    <property type="entry name" value="Cyt_trans-like"/>
</dbReference>
<dbReference type="InterPro" id="IPR005248">
    <property type="entry name" value="NadD/NMNAT"/>
</dbReference>
<dbReference type="InterPro" id="IPR014729">
    <property type="entry name" value="Rossmann-like_a/b/a_fold"/>
</dbReference>
<dbReference type="NCBIfam" id="TIGR00125">
    <property type="entry name" value="cyt_tran_rel"/>
    <property type="match status" value="1"/>
</dbReference>
<dbReference type="NCBIfam" id="TIGR00482">
    <property type="entry name" value="nicotinate (nicotinamide) nucleotide adenylyltransferase"/>
    <property type="match status" value="1"/>
</dbReference>
<dbReference type="NCBIfam" id="NF000839">
    <property type="entry name" value="PRK00071.1-1"/>
    <property type="match status" value="1"/>
</dbReference>
<dbReference type="NCBIfam" id="NF000840">
    <property type="entry name" value="PRK00071.1-3"/>
    <property type="match status" value="1"/>
</dbReference>
<dbReference type="PANTHER" id="PTHR39321">
    <property type="entry name" value="NICOTINATE-NUCLEOTIDE ADENYLYLTRANSFERASE-RELATED"/>
    <property type="match status" value="1"/>
</dbReference>
<dbReference type="PANTHER" id="PTHR39321:SF3">
    <property type="entry name" value="PHOSPHOPANTETHEINE ADENYLYLTRANSFERASE"/>
    <property type="match status" value="1"/>
</dbReference>
<dbReference type="Pfam" id="PF01467">
    <property type="entry name" value="CTP_transf_like"/>
    <property type="match status" value="1"/>
</dbReference>
<dbReference type="SUPFAM" id="SSF52374">
    <property type="entry name" value="Nucleotidylyl transferase"/>
    <property type="match status" value="1"/>
</dbReference>
<feature type="chain" id="PRO_0000310142" description="Probable nicotinate-nucleotide adenylyltransferase">
    <location>
        <begin position="1"/>
        <end position="212"/>
    </location>
</feature>
<gene>
    <name evidence="1" type="primary">nadD</name>
    <name type="ordered locus">Shewmr4_0994</name>
</gene>
<name>NADD_SHESM</name>
<evidence type="ECO:0000255" key="1">
    <source>
        <dbReference type="HAMAP-Rule" id="MF_00244"/>
    </source>
</evidence>
<sequence length="212" mass="24073">MRIGILGGTFDPIHYGHIRPAMEVKASLKLDNILLMPNHIPPHKNTTHSSTAQRLEMVAQVCEALTGFELCDIEAKRNSPSYTVVTLKQLSRLYPDDELFFIMGMDSFIHLQSWHKWQQLFELANIVVCQRPGWHLAEGHPMQHELSARHATLEALSHSSAPQHGRIFTVDISPQDISSTQIRSQLAMGEIPQDALLPVTLNYIQKQRLYFS</sequence>
<accession>Q0HLJ3</accession>
<organism>
    <name type="scientific">Shewanella sp. (strain MR-4)</name>
    <dbReference type="NCBI Taxonomy" id="60480"/>
    <lineage>
        <taxon>Bacteria</taxon>
        <taxon>Pseudomonadati</taxon>
        <taxon>Pseudomonadota</taxon>
        <taxon>Gammaproteobacteria</taxon>
        <taxon>Alteromonadales</taxon>
        <taxon>Shewanellaceae</taxon>
        <taxon>Shewanella</taxon>
    </lineage>
</organism>
<protein>
    <recommendedName>
        <fullName evidence="1">Probable nicotinate-nucleotide adenylyltransferase</fullName>
        <ecNumber evidence="1">2.7.7.18</ecNumber>
    </recommendedName>
    <alternativeName>
        <fullName evidence="1">Deamido-NAD(+) diphosphorylase</fullName>
    </alternativeName>
    <alternativeName>
        <fullName evidence="1">Deamido-NAD(+) pyrophosphorylase</fullName>
    </alternativeName>
    <alternativeName>
        <fullName evidence="1">Nicotinate mononucleotide adenylyltransferase</fullName>
        <shortName evidence="1">NaMN adenylyltransferase</shortName>
    </alternativeName>
</protein>
<reference key="1">
    <citation type="submission" date="2006-08" db="EMBL/GenBank/DDBJ databases">
        <title>Complete sequence of Shewanella sp. MR-4.</title>
        <authorList>
            <consortium name="US DOE Joint Genome Institute"/>
            <person name="Copeland A."/>
            <person name="Lucas S."/>
            <person name="Lapidus A."/>
            <person name="Barry K."/>
            <person name="Detter J.C."/>
            <person name="Glavina del Rio T."/>
            <person name="Hammon N."/>
            <person name="Israni S."/>
            <person name="Dalin E."/>
            <person name="Tice H."/>
            <person name="Pitluck S."/>
            <person name="Kiss H."/>
            <person name="Brettin T."/>
            <person name="Bruce D."/>
            <person name="Han C."/>
            <person name="Tapia R."/>
            <person name="Gilna P."/>
            <person name="Schmutz J."/>
            <person name="Larimer F."/>
            <person name="Land M."/>
            <person name="Hauser L."/>
            <person name="Kyrpides N."/>
            <person name="Mikhailova N."/>
            <person name="Nealson K."/>
            <person name="Konstantinidis K."/>
            <person name="Klappenbach J."/>
            <person name="Tiedje J."/>
            <person name="Richardson P."/>
        </authorList>
    </citation>
    <scope>NUCLEOTIDE SEQUENCE [LARGE SCALE GENOMIC DNA]</scope>
    <source>
        <strain>MR-4</strain>
    </source>
</reference>
<keyword id="KW-0067">ATP-binding</keyword>
<keyword id="KW-0520">NAD</keyword>
<keyword id="KW-0547">Nucleotide-binding</keyword>
<keyword id="KW-0548">Nucleotidyltransferase</keyword>
<keyword id="KW-0662">Pyridine nucleotide biosynthesis</keyword>
<keyword id="KW-0808">Transferase</keyword>